<organism>
    <name type="scientific">Arabidopsis thaliana</name>
    <name type="common">Mouse-ear cress</name>
    <dbReference type="NCBI Taxonomy" id="3702"/>
    <lineage>
        <taxon>Eukaryota</taxon>
        <taxon>Viridiplantae</taxon>
        <taxon>Streptophyta</taxon>
        <taxon>Embryophyta</taxon>
        <taxon>Tracheophyta</taxon>
        <taxon>Spermatophyta</taxon>
        <taxon>Magnoliopsida</taxon>
        <taxon>eudicotyledons</taxon>
        <taxon>Gunneridae</taxon>
        <taxon>Pentapetalae</taxon>
        <taxon>rosids</taxon>
        <taxon>malvids</taxon>
        <taxon>Brassicales</taxon>
        <taxon>Brassicaceae</taxon>
        <taxon>Camelineae</taxon>
        <taxon>Arabidopsis</taxon>
    </lineage>
</organism>
<name>LRK51_ARATH</name>
<accession>O04534</accession>
<feature type="signal peptide" evidence="2">
    <location>
        <begin position="1"/>
        <end position="18"/>
    </location>
</feature>
<feature type="chain" id="PRO_0000403089" description="Putative L-type lectin-domain containing receptor kinase V.1">
    <location>
        <begin position="19"/>
        <end position="666"/>
    </location>
</feature>
<feature type="topological domain" description="Extracellular" evidence="2">
    <location>
        <begin position="19"/>
        <end position="289"/>
    </location>
</feature>
<feature type="transmembrane region" description="Helical" evidence="2">
    <location>
        <begin position="290"/>
        <end position="310"/>
    </location>
</feature>
<feature type="topological domain" description="Cytoplasmic" evidence="2">
    <location>
        <begin position="311"/>
        <end position="666"/>
    </location>
</feature>
<feature type="domain" description="Protein kinase" evidence="3">
    <location>
        <begin position="344"/>
        <end position="625"/>
    </location>
</feature>
<feature type="region of interest" description="Legume-lectin like">
    <location>
        <begin position="27"/>
        <end position="257"/>
    </location>
</feature>
<feature type="active site" description="Proton acceptor" evidence="3 4">
    <location>
        <position position="469"/>
    </location>
</feature>
<feature type="binding site" evidence="3">
    <location>
        <begin position="350"/>
        <end position="358"/>
    </location>
    <ligand>
        <name>ATP</name>
        <dbReference type="ChEBI" id="CHEBI:30616"/>
    </ligand>
</feature>
<feature type="binding site" evidence="3">
    <location>
        <position position="373"/>
    </location>
    <ligand>
        <name>ATP</name>
        <dbReference type="ChEBI" id="CHEBI:30616"/>
    </ligand>
</feature>
<feature type="glycosylation site" description="N-linked (GlcNAc...) asparagine" evidence="2">
    <location>
        <position position="29"/>
    </location>
</feature>
<feature type="glycosylation site" description="N-linked (GlcNAc...) asparagine" evidence="2">
    <location>
        <position position="74"/>
    </location>
</feature>
<feature type="glycosylation site" description="N-linked (GlcNAc...) asparagine" evidence="2">
    <location>
        <position position="123"/>
    </location>
</feature>
<feature type="glycosylation site" description="N-linked (GlcNAc...) asparagine" evidence="2">
    <location>
        <position position="176"/>
    </location>
</feature>
<feature type="glycosylation site" description="N-linked (GlcNAc...) asparagine" evidence="2">
    <location>
        <position position="204"/>
    </location>
</feature>
<feature type="glycosylation site" description="N-linked (GlcNAc...) asparagine" evidence="2">
    <location>
        <position position="259"/>
    </location>
</feature>
<proteinExistence type="inferred from homology"/>
<gene>
    <name type="primary">LECRK51</name>
    <name type="synonym">LECRKB2</name>
    <name type="ordered locus">At1g70110</name>
    <name type="ORF">F20P5.16</name>
</gene>
<protein>
    <recommendedName>
        <fullName>Putative L-type lectin-domain containing receptor kinase V.1</fullName>
        <shortName>Arabidopsis thaliana lectin-receptor kinase b2</shortName>
        <shortName>AthlecRK-b2</shortName>
        <shortName>LecRK-V.1</shortName>
        <ecNumber>2.7.11.1</ecNumber>
    </recommendedName>
</protein>
<sequence>MVLLLFLVLFFVPESVVCQRPNPNGVEFNTSGNMYTSGSAYINNNGLIRLTNSTPQTTGQVFYNDQLRFKNSVNGTVSSFSTTFVFSIEFHNGIYGGYGIAFVICPTRDLSPTFPTTYLGLFNRSNMGDPKNHIVAVELDTKVDQQFEDKDANHVGIDINTLVSDTVALAGYYMDNGTFRSLLLNSGQPMQIWIEYDSKQKQINVTLHPLYVPKPKIPLLSLEKDLSPYLLELMYVGFTSTTGDLTASHYILGWTFKMNGTTPDIDPSRLPKIPRYNQPWIQSPNGILTISLTVSGVIILIILSLSLWLFLKRKKLLEVLEDWEVQFGPHRFAFKDLHIATKGFKDTEVLGKGGFGKVYKGTLPVSNVEIAVKMVSHDSRQGMREFIAEIATIGRLRHPNLVRLQGYCRHKGELYLVYDCMAKGSLDKFLYHQQTGNLDWSQRFKIIKDVASGLYYLHQQWVQVIIHRDIKPANILLDANMNAKLGDFGLAKLCDHGTDPQTSHVAGTLGYISPELSRTGKASTRSDVFAFGIVMLEIACGRKPILPRASQREMVLTDWVLECWENEDIMQVLDHKIGQEYVEEQAALVLKLGLFCSHPVAAIRPNMSSVIQLLDSVAQLPHNLLDIVQTREVHRGTEISGEAADSPESCSIAPLTFTESFVSHGR</sequence>
<evidence type="ECO:0000250" key="1"/>
<evidence type="ECO:0000255" key="2"/>
<evidence type="ECO:0000255" key="3">
    <source>
        <dbReference type="PROSITE-ProRule" id="PRU00159"/>
    </source>
</evidence>
<evidence type="ECO:0000255" key="4">
    <source>
        <dbReference type="PROSITE-ProRule" id="PRU10027"/>
    </source>
</evidence>
<evidence type="ECO:0000305" key="5"/>
<dbReference type="EC" id="2.7.11.1"/>
<dbReference type="EMBL" id="AC002062">
    <property type="protein sequence ID" value="AAB61103.1"/>
    <property type="molecule type" value="Genomic_DNA"/>
</dbReference>
<dbReference type="EMBL" id="CP002684">
    <property type="protein sequence ID" value="AEE35021.1"/>
    <property type="molecule type" value="Genomic_DNA"/>
</dbReference>
<dbReference type="PIR" id="H96723">
    <property type="entry name" value="H96723"/>
</dbReference>
<dbReference type="RefSeq" id="NP_177168.1">
    <property type="nucleotide sequence ID" value="NM_105679.2"/>
</dbReference>
<dbReference type="SMR" id="O04534"/>
<dbReference type="FunCoup" id="O04534">
    <property type="interactions" value="7"/>
</dbReference>
<dbReference type="STRING" id="3702.O04534"/>
<dbReference type="GlyCosmos" id="O04534">
    <property type="glycosylation" value="6 sites, No reported glycans"/>
</dbReference>
<dbReference type="GlyGen" id="O04534">
    <property type="glycosylation" value="6 sites"/>
</dbReference>
<dbReference type="PaxDb" id="3702-AT1G70110.1"/>
<dbReference type="EnsemblPlants" id="AT1G70110.1">
    <property type="protein sequence ID" value="AT1G70110.1"/>
    <property type="gene ID" value="AT1G70110"/>
</dbReference>
<dbReference type="GeneID" id="843347"/>
<dbReference type="Gramene" id="AT1G70110.1">
    <property type="protein sequence ID" value="AT1G70110.1"/>
    <property type="gene ID" value="AT1G70110"/>
</dbReference>
<dbReference type="KEGG" id="ath:AT1G70110"/>
<dbReference type="Araport" id="AT1G70110"/>
<dbReference type="TAIR" id="AT1G70110">
    <property type="gene designation" value="LECRK-V.1"/>
</dbReference>
<dbReference type="eggNOG" id="ENOG502QTAM">
    <property type="taxonomic scope" value="Eukaryota"/>
</dbReference>
<dbReference type="HOGENOM" id="CLU_000288_62_3_1"/>
<dbReference type="InParanoid" id="O04534"/>
<dbReference type="OMA" id="CEAGNSP"/>
<dbReference type="PhylomeDB" id="O04534"/>
<dbReference type="PRO" id="PR:O04534"/>
<dbReference type="Proteomes" id="UP000006548">
    <property type="component" value="Chromosome 1"/>
</dbReference>
<dbReference type="ExpressionAtlas" id="O04534">
    <property type="expression patterns" value="baseline and differential"/>
</dbReference>
<dbReference type="GO" id="GO:0005886">
    <property type="term" value="C:plasma membrane"/>
    <property type="evidence" value="ECO:0000250"/>
    <property type="project" value="UniProtKB"/>
</dbReference>
<dbReference type="GO" id="GO:0005524">
    <property type="term" value="F:ATP binding"/>
    <property type="evidence" value="ECO:0007669"/>
    <property type="project" value="UniProtKB-KW"/>
</dbReference>
<dbReference type="GO" id="GO:0030246">
    <property type="term" value="F:carbohydrate binding"/>
    <property type="evidence" value="ECO:0007669"/>
    <property type="project" value="UniProtKB-KW"/>
</dbReference>
<dbReference type="GO" id="GO:0106310">
    <property type="term" value="F:protein serine kinase activity"/>
    <property type="evidence" value="ECO:0007669"/>
    <property type="project" value="RHEA"/>
</dbReference>
<dbReference type="GO" id="GO:0004674">
    <property type="term" value="F:protein serine/threonine kinase activity"/>
    <property type="evidence" value="ECO:0007669"/>
    <property type="project" value="UniProtKB-KW"/>
</dbReference>
<dbReference type="CDD" id="cd06899">
    <property type="entry name" value="lectin_legume_LecRK_Arcelin_ConA"/>
    <property type="match status" value="1"/>
</dbReference>
<dbReference type="CDD" id="cd14066">
    <property type="entry name" value="STKc_IRAK"/>
    <property type="match status" value="1"/>
</dbReference>
<dbReference type="FunFam" id="1.10.510.10:FF:000108">
    <property type="entry name" value="L-type lectin-domain containing receptor kinase S.4"/>
    <property type="match status" value="1"/>
</dbReference>
<dbReference type="FunFam" id="2.60.120.200:FF:000112">
    <property type="entry name" value="L-type lectin-domain containing receptor kinase V.9"/>
    <property type="match status" value="1"/>
</dbReference>
<dbReference type="FunFam" id="3.30.200.20:FF:000112">
    <property type="entry name" value="Lectin-domain containing receptor kinase A4.3"/>
    <property type="match status" value="1"/>
</dbReference>
<dbReference type="Gene3D" id="2.60.120.200">
    <property type="match status" value="1"/>
</dbReference>
<dbReference type="Gene3D" id="3.30.200.20">
    <property type="entry name" value="Phosphorylase Kinase, domain 1"/>
    <property type="match status" value="1"/>
</dbReference>
<dbReference type="Gene3D" id="1.10.510.10">
    <property type="entry name" value="Transferase(Phosphotransferase) domain 1"/>
    <property type="match status" value="1"/>
</dbReference>
<dbReference type="InterPro" id="IPR013320">
    <property type="entry name" value="ConA-like_dom_sf"/>
</dbReference>
<dbReference type="InterPro" id="IPR011009">
    <property type="entry name" value="Kinase-like_dom_sf"/>
</dbReference>
<dbReference type="InterPro" id="IPR050528">
    <property type="entry name" value="L-type_Lectin-RKs"/>
</dbReference>
<dbReference type="InterPro" id="IPR001220">
    <property type="entry name" value="Legume_lectin_dom"/>
</dbReference>
<dbReference type="InterPro" id="IPR000719">
    <property type="entry name" value="Prot_kinase_dom"/>
</dbReference>
<dbReference type="InterPro" id="IPR017441">
    <property type="entry name" value="Protein_kinase_ATP_BS"/>
</dbReference>
<dbReference type="InterPro" id="IPR008271">
    <property type="entry name" value="Ser/Thr_kinase_AS"/>
</dbReference>
<dbReference type="PANTHER" id="PTHR27007">
    <property type="match status" value="1"/>
</dbReference>
<dbReference type="Pfam" id="PF00139">
    <property type="entry name" value="Lectin_legB"/>
    <property type="match status" value="1"/>
</dbReference>
<dbReference type="Pfam" id="PF00069">
    <property type="entry name" value="Pkinase"/>
    <property type="match status" value="1"/>
</dbReference>
<dbReference type="SMART" id="SM00220">
    <property type="entry name" value="S_TKc"/>
    <property type="match status" value="1"/>
</dbReference>
<dbReference type="SUPFAM" id="SSF49899">
    <property type="entry name" value="Concanavalin A-like lectins/glucanases"/>
    <property type="match status" value="1"/>
</dbReference>
<dbReference type="SUPFAM" id="SSF56112">
    <property type="entry name" value="Protein kinase-like (PK-like)"/>
    <property type="match status" value="1"/>
</dbReference>
<dbReference type="PROSITE" id="PS00307">
    <property type="entry name" value="LECTIN_LEGUME_BETA"/>
    <property type="match status" value="1"/>
</dbReference>
<dbReference type="PROSITE" id="PS00107">
    <property type="entry name" value="PROTEIN_KINASE_ATP"/>
    <property type="match status" value="1"/>
</dbReference>
<dbReference type="PROSITE" id="PS50011">
    <property type="entry name" value="PROTEIN_KINASE_DOM"/>
    <property type="match status" value="1"/>
</dbReference>
<dbReference type="PROSITE" id="PS00108">
    <property type="entry name" value="PROTEIN_KINASE_ST"/>
    <property type="match status" value="1"/>
</dbReference>
<comment type="catalytic activity">
    <reaction>
        <text>L-seryl-[protein] + ATP = O-phospho-L-seryl-[protein] + ADP + H(+)</text>
        <dbReference type="Rhea" id="RHEA:17989"/>
        <dbReference type="Rhea" id="RHEA-COMP:9863"/>
        <dbReference type="Rhea" id="RHEA-COMP:11604"/>
        <dbReference type="ChEBI" id="CHEBI:15378"/>
        <dbReference type="ChEBI" id="CHEBI:29999"/>
        <dbReference type="ChEBI" id="CHEBI:30616"/>
        <dbReference type="ChEBI" id="CHEBI:83421"/>
        <dbReference type="ChEBI" id="CHEBI:456216"/>
        <dbReference type="EC" id="2.7.11.1"/>
    </reaction>
</comment>
<comment type="catalytic activity">
    <reaction>
        <text>L-threonyl-[protein] + ATP = O-phospho-L-threonyl-[protein] + ADP + H(+)</text>
        <dbReference type="Rhea" id="RHEA:46608"/>
        <dbReference type="Rhea" id="RHEA-COMP:11060"/>
        <dbReference type="Rhea" id="RHEA-COMP:11605"/>
        <dbReference type="ChEBI" id="CHEBI:15378"/>
        <dbReference type="ChEBI" id="CHEBI:30013"/>
        <dbReference type="ChEBI" id="CHEBI:30616"/>
        <dbReference type="ChEBI" id="CHEBI:61977"/>
        <dbReference type="ChEBI" id="CHEBI:456216"/>
        <dbReference type="EC" id="2.7.11.1"/>
    </reaction>
</comment>
<comment type="subcellular location">
    <subcellularLocation>
        <location evidence="1">Cell membrane</location>
        <topology evidence="1">Single-pass type I membrane protein</topology>
    </subcellularLocation>
</comment>
<comment type="similarity">
    <text evidence="5">In the C-terminal section; belongs to the protein kinase superfamily. Ser/Thr protein kinase family.</text>
</comment>
<comment type="similarity">
    <text evidence="5">In the N-terminal section; belongs to the leguminous lectin family.</text>
</comment>
<keyword id="KW-0067">ATP-binding</keyword>
<keyword id="KW-1003">Cell membrane</keyword>
<keyword id="KW-0325">Glycoprotein</keyword>
<keyword id="KW-0418">Kinase</keyword>
<keyword id="KW-0430">Lectin</keyword>
<keyword id="KW-0472">Membrane</keyword>
<keyword id="KW-0547">Nucleotide-binding</keyword>
<keyword id="KW-0675">Receptor</keyword>
<keyword id="KW-1185">Reference proteome</keyword>
<keyword id="KW-0723">Serine/threonine-protein kinase</keyword>
<keyword id="KW-0732">Signal</keyword>
<keyword id="KW-0808">Transferase</keyword>
<keyword id="KW-0812">Transmembrane</keyword>
<keyword id="KW-1133">Transmembrane helix</keyword>
<reference key="1">
    <citation type="journal article" date="2000" name="Nature">
        <title>Sequence and analysis of chromosome 1 of the plant Arabidopsis thaliana.</title>
        <authorList>
            <person name="Theologis A."/>
            <person name="Ecker J.R."/>
            <person name="Palm C.J."/>
            <person name="Federspiel N.A."/>
            <person name="Kaul S."/>
            <person name="White O."/>
            <person name="Alonso J."/>
            <person name="Altafi H."/>
            <person name="Araujo R."/>
            <person name="Bowman C.L."/>
            <person name="Brooks S.Y."/>
            <person name="Buehler E."/>
            <person name="Chan A."/>
            <person name="Chao Q."/>
            <person name="Chen H."/>
            <person name="Cheuk R.F."/>
            <person name="Chin C.W."/>
            <person name="Chung M.K."/>
            <person name="Conn L."/>
            <person name="Conway A.B."/>
            <person name="Conway A.R."/>
            <person name="Creasy T.H."/>
            <person name="Dewar K."/>
            <person name="Dunn P."/>
            <person name="Etgu P."/>
            <person name="Feldblyum T.V."/>
            <person name="Feng J.-D."/>
            <person name="Fong B."/>
            <person name="Fujii C.Y."/>
            <person name="Gill J.E."/>
            <person name="Goldsmith A.D."/>
            <person name="Haas B."/>
            <person name="Hansen N.F."/>
            <person name="Hughes B."/>
            <person name="Huizar L."/>
            <person name="Hunter J.L."/>
            <person name="Jenkins J."/>
            <person name="Johnson-Hopson C."/>
            <person name="Khan S."/>
            <person name="Khaykin E."/>
            <person name="Kim C.J."/>
            <person name="Koo H.L."/>
            <person name="Kremenetskaia I."/>
            <person name="Kurtz D.B."/>
            <person name="Kwan A."/>
            <person name="Lam B."/>
            <person name="Langin-Hooper S."/>
            <person name="Lee A."/>
            <person name="Lee J.M."/>
            <person name="Lenz C.A."/>
            <person name="Li J.H."/>
            <person name="Li Y.-P."/>
            <person name="Lin X."/>
            <person name="Liu S.X."/>
            <person name="Liu Z.A."/>
            <person name="Luros J.S."/>
            <person name="Maiti R."/>
            <person name="Marziali A."/>
            <person name="Militscher J."/>
            <person name="Miranda M."/>
            <person name="Nguyen M."/>
            <person name="Nierman W.C."/>
            <person name="Osborne B.I."/>
            <person name="Pai G."/>
            <person name="Peterson J."/>
            <person name="Pham P.K."/>
            <person name="Rizzo M."/>
            <person name="Rooney T."/>
            <person name="Rowley D."/>
            <person name="Sakano H."/>
            <person name="Salzberg S.L."/>
            <person name="Schwartz J.R."/>
            <person name="Shinn P."/>
            <person name="Southwick A.M."/>
            <person name="Sun H."/>
            <person name="Tallon L.J."/>
            <person name="Tambunga G."/>
            <person name="Toriumi M.J."/>
            <person name="Town C.D."/>
            <person name="Utterback T."/>
            <person name="Van Aken S."/>
            <person name="Vaysberg M."/>
            <person name="Vysotskaia V.S."/>
            <person name="Walker M."/>
            <person name="Wu D."/>
            <person name="Yu G."/>
            <person name="Fraser C.M."/>
            <person name="Venter J.C."/>
            <person name="Davis R.W."/>
        </authorList>
    </citation>
    <scope>NUCLEOTIDE SEQUENCE [LARGE SCALE GENOMIC DNA]</scope>
    <source>
        <strain>cv. Columbia</strain>
    </source>
</reference>
<reference key="2">
    <citation type="journal article" date="2017" name="Plant J.">
        <title>Araport11: a complete reannotation of the Arabidopsis thaliana reference genome.</title>
        <authorList>
            <person name="Cheng C.Y."/>
            <person name="Krishnakumar V."/>
            <person name="Chan A.P."/>
            <person name="Thibaud-Nissen F."/>
            <person name="Schobel S."/>
            <person name="Town C.D."/>
        </authorList>
    </citation>
    <scope>GENOME REANNOTATION</scope>
    <source>
        <strain>cv. Columbia</strain>
    </source>
</reference>
<reference key="3">
    <citation type="journal article" date="1999" name="Plant Mol. Biol.">
        <title>Characterization of the Arabidopsis lecRK-a genes: members of a superfamily encoding putative receptors with an extracellular domain homologous to legume lectins.</title>
        <authorList>
            <person name="Herve C."/>
            <person name="Serres J."/>
            <person name="Dabos P."/>
            <person name="Canut H."/>
            <person name="Barre A."/>
            <person name="Rouge P."/>
            <person name="Lescure B."/>
        </authorList>
    </citation>
    <scope>GENE FAMILY</scope>
</reference>
<reference key="4">
    <citation type="journal article" date="2002" name="Crit. Rev. Plant Sci.">
        <title>Lectin receptor kinases in plants.</title>
        <authorList>
            <person name="Barre A."/>
            <person name="Herve C."/>
            <person name="Lescure B."/>
            <person name="Rouge P."/>
        </authorList>
    </citation>
    <scope>GENE FAMILY</scope>
</reference>
<reference key="5">
    <citation type="journal article" date="2009" name="J. Exp. Bot.">
        <title>Arabidopsis L-type lectin receptor kinases: phylogeny, classification, and expression profiles.</title>
        <authorList>
            <person name="Bouwmeester K."/>
            <person name="Govers F."/>
        </authorList>
    </citation>
    <scope>GENE FAMILY</scope>
    <scope>NOMENCLATURE</scope>
</reference>